<keyword id="KW-0002">3D-structure</keyword>
<keyword id="KW-0963">Cytoplasm</keyword>
<keyword id="KW-0539">Nucleus</keyword>
<keyword id="KW-1185">Reference proteome</keyword>
<keyword id="KW-0687">Ribonucleoprotein</keyword>
<keyword id="KW-0689">Ribosomal protein</keyword>
<accession>G0S616</accession>
<name>MRT4_CHATD</name>
<protein>
    <recommendedName>
        <fullName evidence="4">Large ribosomal subunit protein uL10</fullName>
    </recommendedName>
    <alternativeName>
        <fullName evidence="1">Ribosome assembly factor mrt4</fullName>
    </alternativeName>
    <alternativeName>
        <fullName evidence="1">mRNA turnover protein 4</fullName>
    </alternativeName>
</protein>
<sequence>MPKSKRARVYHLTQVNKKGREAKERLFSNIRETIPKYQHCFVFSVDNMRNNYLKDVRHELNDCRIFFGKTKLMARALGTTPEEEQADGLHRLTRYLTGTVGLLFTNRDPADIESYFSNLSQVDFARAGTVAPRTVTVPPGIVYSTGGEVPPEHDVPVSHTLEPELRRLGMPVRMIKGKVCLGDEKGEASEGYTICKEGEVLDSRQTRLLKLFSICLSEFKVSLLGYWSSASGEVTELEAGKTRPKREGNRRQAMNGDEMDEDQSSDEDSD</sequence>
<gene>
    <name evidence="5" type="ORF">CTHT_0025680</name>
</gene>
<feature type="chain" id="PRO_0000430590" description="Large ribosomal subunit protein uL10">
    <location>
        <begin position="1"/>
        <end position="270"/>
    </location>
</feature>
<feature type="region of interest" description="Disordered" evidence="2">
    <location>
        <begin position="234"/>
        <end position="270"/>
    </location>
</feature>
<feature type="compositionally biased region" description="Basic and acidic residues" evidence="2">
    <location>
        <begin position="238"/>
        <end position="250"/>
    </location>
</feature>
<feature type="compositionally biased region" description="Acidic residues" evidence="2">
    <location>
        <begin position="257"/>
        <end position="270"/>
    </location>
</feature>
<feature type="sequence conflict" description="In Ref. 1; EGS20732." ref="1">
    <original>T</original>
    <variation>I</variation>
    <location>
        <position position="13"/>
    </location>
</feature>
<feature type="sequence conflict" description="In Ref. 1; EGS20732." ref="1">
    <original>P</original>
    <variation>T</variation>
    <location>
        <position position="139"/>
    </location>
</feature>
<feature type="sequence conflict" description="In Ref. 1; EGS20732." ref="1">
    <original>S</original>
    <variation>N</variation>
    <location>
        <position position="228"/>
    </location>
</feature>
<feature type="sequence conflict" description="In Ref. 1; EGS20732." ref="1">
    <original>M</original>
    <variation>I</variation>
    <location>
        <position position="259"/>
    </location>
</feature>
<feature type="helix" evidence="6">
    <location>
        <begin position="8"/>
        <end position="15"/>
    </location>
</feature>
<feature type="helix" evidence="6">
    <location>
        <begin position="26"/>
        <end position="33"/>
    </location>
</feature>
<feature type="helix" evidence="6">
    <location>
        <begin position="34"/>
        <end position="36"/>
    </location>
</feature>
<feature type="strand" evidence="6">
    <location>
        <begin position="38"/>
        <end position="47"/>
    </location>
</feature>
<feature type="helix" evidence="6">
    <location>
        <begin position="50"/>
        <end position="59"/>
    </location>
</feature>
<feature type="turn" evidence="6">
    <location>
        <begin position="60"/>
        <end position="62"/>
    </location>
</feature>
<feature type="strand" evidence="6">
    <location>
        <begin position="63"/>
        <end position="66"/>
    </location>
</feature>
<feature type="helix" evidence="6">
    <location>
        <begin position="70"/>
        <end position="77"/>
    </location>
</feature>
<feature type="turn" evidence="6">
    <location>
        <begin position="81"/>
        <end position="83"/>
    </location>
</feature>
<feature type="helix" evidence="6">
    <location>
        <begin position="89"/>
        <end position="95"/>
    </location>
</feature>
<feature type="strand" evidence="6">
    <location>
        <begin position="98"/>
        <end position="107"/>
    </location>
</feature>
<feature type="helix" evidence="6">
    <location>
        <begin position="109"/>
        <end position="118"/>
    </location>
</feature>
<feature type="strand" evidence="6">
    <location>
        <begin position="121"/>
        <end position="123"/>
    </location>
</feature>
<feature type="strand" evidence="6">
    <location>
        <begin position="135"/>
        <end position="137"/>
    </location>
</feature>
<feature type="strand" evidence="6">
    <location>
        <begin position="139"/>
        <end position="141"/>
    </location>
</feature>
<feature type="turn" evidence="6">
    <location>
        <begin position="144"/>
        <end position="147"/>
    </location>
</feature>
<feature type="helix" evidence="6">
    <location>
        <begin position="151"/>
        <end position="153"/>
    </location>
</feature>
<feature type="helix" evidence="6">
    <location>
        <begin position="159"/>
        <end position="161"/>
    </location>
</feature>
<feature type="helix" evidence="6">
    <location>
        <begin position="162"/>
        <end position="167"/>
    </location>
</feature>
<feature type="strand" evidence="6">
    <location>
        <begin position="172"/>
        <end position="175"/>
    </location>
</feature>
<feature type="strand" evidence="6">
    <location>
        <begin position="178"/>
        <end position="181"/>
    </location>
</feature>
<feature type="strand" evidence="6">
    <location>
        <begin position="192"/>
        <end position="195"/>
    </location>
</feature>
<feature type="helix" evidence="6">
    <location>
        <begin position="203"/>
        <end position="211"/>
    </location>
</feature>
<feature type="strand" evidence="6">
    <location>
        <begin position="217"/>
        <end position="228"/>
    </location>
</feature>
<feature type="turn" evidence="6">
    <location>
        <begin position="229"/>
        <end position="231"/>
    </location>
</feature>
<feature type="strand" evidence="6">
    <location>
        <begin position="234"/>
        <end position="236"/>
    </location>
</feature>
<feature type="helix" evidence="6">
    <location>
        <begin position="238"/>
        <end position="241"/>
    </location>
</feature>
<reference key="1">
    <citation type="journal article" date="2011" name="Cell">
        <title>Insight into structure and assembly of the nuclear pore complex by utilizing the genome of a eukaryotic thermophile.</title>
        <authorList>
            <person name="Amlacher S."/>
            <person name="Sarges P."/>
            <person name="Flemming D."/>
            <person name="van Noort V."/>
            <person name="Kunze R."/>
            <person name="Devos D.P."/>
            <person name="Arumugam M."/>
            <person name="Bork P."/>
            <person name="Hurt E."/>
        </authorList>
    </citation>
    <scope>NUCLEOTIDE SEQUENCE [LARGE SCALE GENOMIC DNA]</scope>
    <source>
        <strain>DSM 1495 / CBS 144.50 / IMI 039719</strain>
    </source>
</reference>
<reference key="2">
    <citation type="journal article" date="2014" name="Nat. Commun.">
        <title>60S ribosome biogenesis requires rotation of the 5S ribonucleoprotein particle.</title>
        <authorList>
            <person name="Leidig C."/>
            <person name="Thoms M."/>
            <person name="Holdermann I."/>
            <person name="Bradatsch B."/>
            <person name="Berninghausen O."/>
            <person name="Bange G."/>
            <person name="Sinning I."/>
            <person name="Hurt E."/>
            <person name="Beckmann R."/>
        </authorList>
    </citation>
    <scope>X-RAY CRYSTALLOGRAPHY (1.80 ANGSTROMS)</scope>
    <scope>IDENTIFICATION OF FRAMESHIFT</scope>
    <scope>SEQUENCE REVISION TO 13; 139; 228 AND 259</scope>
</reference>
<evidence type="ECO:0000250" key="1">
    <source>
        <dbReference type="UniProtKB" id="P33201"/>
    </source>
</evidence>
<evidence type="ECO:0000256" key="2">
    <source>
        <dbReference type="SAM" id="MobiDB-lite"/>
    </source>
</evidence>
<evidence type="ECO:0000303" key="3">
    <source>
    </source>
</evidence>
<evidence type="ECO:0000305" key="4"/>
<evidence type="ECO:0000312" key="5">
    <source>
        <dbReference type="EMBL" id="EGS20732.1"/>
    </source>
</evidence>
<evidence type="ECO:0007829" key="6">
    <source>
        <dbReference type="PDB" id="4NWB"/>
    </source>
</evidence>
<comment type="function">
    <text evidence="1">Component of the ribosome assembly machinery. Nuclear paralog of the ribosomal protein P0, it binds pre-60S subunits at an early stage of assembly in the nucleolus, and is replaced by P0 in cytoplasmic pre-60S subunits and mature 80S ribosomes.</text>
</comment>
<comment type="subunit">
    <text evidence="1">Associates with the pre-60S ribosomal particle.</text>
</comment>
<comment type="subcellular location">
    <subcellularLocation>
        <location evidence="1">Nucleus</location>
        <location evidence="1">Nucleolus</location>
    </subcellularLocation>
    <subcellularLocation>
        <location evidence="1">Cytoplasm</location>
    </subcellularLocation>
    <text evidence="1">Shuttles between the nucleus and the cytoplasm.</text>
</comment>
<comment type="similarity">
    <text evidence="4">Belongs to the universal ribosomal protein uL10 family.</text>
</comment>
<comment type="sequence caution" evidence="3 4">
    <conflict type="erroneous gene model prediction">
        <sequence resource="EMBL-CDS" id="EGS20732"/>
    </conflict>
</comment>
<comment type="sequence caution" evidence="3 4">
    <conflict type="frameshift">
        <sequence resource="EMBL-CDS" id="EGS20732"/>
    </conflict>
</comment>
<proteinExistence type="evidence at protein level"/>
<organism>
    <name type="scientific">Chaetomium thermophilum (strain DSM 1495 / CBS 144.50 / IMI 039719)</name>
    <name type="common">Thermochaetoides thermophila</name>
    <dbReference type="NCBI Taxonomy" id="759272"/>
    <lineage>
        <taxon>Eukaryota</taxon>
        <taxon>Fungi</taxon>
        <taxon>Dikarya</taxon>
        <taxon>Ascomycota</taxon>
        <taxon>Pezizomycotina</taxon>
        <taxon>Sordariomycetes</taxon>
        <taxon>Sordariomycetidae</taxon>
        <taxon>Sordariales</taxon>
        <taxon>Chaetomiaceae</taxon>
        <taxon>Thermochaetoides</taxon>
    </lineage>
</organism>
<dbReference type="EMBL" id="GL988041">
    <property type="protein sequence ID" value="EGS20732.1"/>
    <property type="status" value="ALT_SEQ"/>
    <property type="molecule type" value="Genomic_DNA"/>
</dbReference>
<dbReference type="RefSeq" id="XP_006693028.1">
    <property type="nucleotide sequence ID" value="XM_006692965.1"/>
</dbReference>
<dbReference type="PDB" id="4NWB">
    <property type="method" value="X-ray"/>
    <property type="resolution" value="1.80 A"/>
    <property type="chains" value="A=1-270"/>
</dbReference>
<dbReference type="PDB" id="8I9T">
    <property type="method" value="EM"/>
    <property type="resolution" value="3.60 A"/>
    <property type="chains" value="CF=1-270"/>
</dbReference>
<dbReference type="PDB" id="8I9V">
    <property type="method" value="EM"/>
    <property type="resolution" value="3.10 A"/>
    <property type="chains" value="CF=1-270"/>
</dbReference>
<dbReference type="PDB" id="8I9W">
    <property type="method" value="EM"/>
    <property type="resolution" value="3.10 A"/>
    <property type="chains" value="CF=1-270"/>
</dbReference>
<dbReference type="PDB" id="8I9X">
    <property type="method" value="EM"/>
    <property type="resolution" value="2.80 A"/>
    <property type="chains" value="CF=1-270"/>
</dbReference>
<dbReference type="PDB" id="8I9Y">
    <property type="method" value="EM"/>
    <property type="resolution" value="3.10 A"/>
    <property type="chains" value="CF=1-270"/>
</dbReference>
<dbReference type="PDB" id="8I9Z">
    <property type="method" value="EM"/>
    <property type="resolution" value="2.70 A"/>
    <property type="chains" value="CF=1-270"/>
</dbReference>
<dbReference type="PDB" id="8IA0">
    <property type="method" value="EM"/>
    <property type="resolution" value="2.70 A"/>
    <property type="chains" value="CF=1-270"/>
</dbReference>
<dbReference type="PDB" id="8PV1">
    <property type="method" value="EM"/>
    <property type="resolution" value="2.56 A"/>
    <property type="chains" value="CF=1-270"/>
</dbReference>
<dbReference type="PDB" id="8PV2">
    <property type="method" value="EM"/>
    <property type="resolution" value="2.63 A"/>
    <property type="chains" value="CF=1-270"/>
</dbReference>
<dbReference type="PDB" id="8PV3">
    <property type="method" value="EM"/>
    <property type="resolution" value="2.80 A"/>
    <property type="chains" value="CF=1-270"/>
</dbReference>
<dbReference type="PDB" id="8PV4">
    <property type="method" value="EM"/>
    <property type="resolution" value="2.90 A"/>
    <property type="chains" value="CF=1-270"/>
</dbReference>
<dbReference type="PDB" id="8PV5">
    <property type="method" value="EM"/>
    <property type="resolution" value="2.86 A"/>
    <property type="chains" value="CF=1-270"/>
</dbReference>
<dbReference type="PDB" id="8PV6">
    <property type="method" value="EM"/>
    <property type="resolution" value="2.94 A"/>
    <property type="chains" value="CF=1-270"/>
</dbReference>
<dbReference type="PDB" id="8PV7">
    <property type="method" value="EM"/>
    <property type="resolution" value="2.12 A"/>
    <property type="chains" value="CF=1-270"/>
</dbReference>
<dbReference type="PDB" id="8PV8">
    <property type="method" value="EM"/>
    <property type="resolution" value="2.91 A"/>
    <property type="chains" value="CF=1-270"/>
</dbReference>
<dbReference type="PDB" id="8PVK">
    <property type="method" value="EM"/>
    <property type="resolution" value="2.55 A"/>
    <property type="chains" value="CF=1-270"/>
</dbReference>
<dbReference type="PDB" id="8PVL">
    <property type="method" value="EM"/>
    <property type="resolution" value="2.19 A"/>
    <property type="chains" value="CF=1-270"/>
</dbReference>
<dbReference type="PDBsum" id="4NWB"/>
<dbReference type="PDBsum" id="8I9T"/>
<dbReference type="PDBsum" id="8I9V"/>
<dbReference type="PDBsum" id="8I9W"/>
<dbReference type="PDBsum" id="8I9X"/>
<dbReference type="PDBsum" id="8I9Y"/>
<dbReference type="PDBsum" id="8I9Z"/>
<dbReference type="PDBsum" id="8IA0"/>
<dbReference type="PDBsum" id="8PV1"/>
<dbReference type="PDBsum" id="8PV2"/>
<dbReference type="PDBsum" id="8PV3"/>
<dbReference type="PDBsum" id="8PV4"/>
<dbReference type="PDBsum" id="8PV5"/>
<dbReference type="PDBsum" id="8PV6"/>
<dbReference type="PDBsum" id="8PV7"/>
<dbReference type="PDBsum" id="8PV8"/>
<dbReference type="PDBsum" id="8PVK"/>
<dbReference type="PDBsum" id="8PVL"/>
<dbReference type="EMDB" id="EMD-17950"/>
<dbReference type="EMDB" id="EMD-17951"/>
<dbReference type="EMDB" id="EMD-17952"/>
<dbReference type="EMDB" id="EMD-17953"/>
<dbReference type="EMDB" id="EMD-17954"/>
<dbReference type="EMDB" id="EMD-17955"/>
<dbReference type="EMDB" id="EMD-17956"/>
<dbReference type="EMDB" id="EMD-17957"/>
<dbReference type="EMDB" id="EMD-17969"/>
<dbReference type="EMDB" id="EMD-17970"/>
<dbReference type="EMDB" id="EMD-35283"/>
<dbReference type="EMDB" id="EMD-35285"/>
<dbReference type="EMDB" id="EMD-35286"/>
<dbReference type="EMDB" id="EMD-35287"/>
<dbReference type="EMDB" id="EMD-35288"/>
<dbReference type="EMDB" id="EMD-35289"/>
<dbReference type="EMDB" id="EMD-35290"/>
<dbReference type="SMR" id="G0S616"/>
<dbReference type="STRING" id="759272.G0S616"/>
<dbReference type="GeneID" id="18256606"/>
<dbReference type="KEGG" id="cthr:CTHT_0025680"/>
<dbReference type="HOGENOM" id="CLU_071690_3_0_1"/>
<dbReference type="OrthoDB" id="10262308at2759"/>
<dbReference type="EvolutionaryTrace" id="G0S616"/>
<dbReference type="Proteomes" id="UP000008066">
    <property type="component" value="Unassembled WGS sequence"/>
</dbReference>
<dbReference type="GO" id="GO:0005737">
    <property type="term" value="C:cytoplasm"/>
    <property type="evidence" value="ECO:0007669"/>
    <property type="project" value="UniProtKB-SubCell"/>
</dbReference>
<dbReference type="GO" id="GO:0005730">
    <property type="term" value="C:nucleolus"/>
    <property type="evidence" value="ECO:0007669"/>
    <property type="project" value="UniProtKB-SubCell"/>
</dbReference>
<dbReference type="GO" id="GO:0030687">
    <property type="term" value="C:preribosome, large subunit precursor"/>
    <property type="evidence" value="ECO:0007669"/>
    <property type="project" value="TreeGrafter"/>
</dbReference>
<dbReference type="GO" id="GO:0005840">
    <property type="term" value="C:ribosome"/>
    <property type="evidence" value="ECO:0007669"/>
    <property type="project" value="UniProtKB-KW"/>
</dbReference>
<dbReference type="GO" id="GO:0003723">
    <property type="term" value="F:RNA binding"/>
    <property type="evidence" value="ECO:0007669"/>
    <property type="project" value="TreeGrafter"/>
</dbReference>
<dbReference type="GO" id="GO:0000956">
    <property type="term" value="P:nuclear-transcribed mRNA catabolic process"/>
    <property type="evidence" value="ECO:0007669"/>
    <property type="project" value="TreeGrafter"/>
</dbReference>
<dbReference type="GO" id="GO:0000027">
    <property type="term" value="P:ribosomal large subunit assembly"/>
    <property type="evidence" value="ECO:0007669"/>
    <property type="project" value="InterPro"/>
</dbReference>
<dbReference type="GO" id="GO:0006364">
    <property type="term" value="P:rRNA processing"/>
    <property type="evidence" value="ECO:0007669"/>
    <property type="project" value="TreeGrafter"/>
</dbReference>
<dbReference type="CDD" id="cd05796">
    <property type="entry name" value="Ribosomal_P0_like"/>
    <property type="match status" value="1"/>
</dbReference>
<dbReference type="FunFam" id="3.30.70.1730:FF:000005">
    <property type="entry name" value="Ribosome assembly factor mrt4"/>
    <property type="match status" value="1"/>
</dbReference>
<dbReference type="FunFam" id="3.90.105.20:FF:000003">
    <property type="entry name" value="Ribosome assembly factor mrt4"/>
    <property type="match status" value="1"/>
</dbReference>
<dbReference type="Gene3D" id="3.30.70.1730">
    <property type="match status" value="1"/>
</dbReference>
<dbReference type="Gene3D" id="3.90.105.20">
    <property type="match status" value="1"/>
</dbReference>
<dbReference type="InterPro" id="IPR033867">
    <property type="entry name" value="Mrt4"/>
</dbReference>
<dbReference type="InterPro" id="IPR001790">
    <property type="entry name" value="Ribosomal_uL10"/>
</dbReference>
<dbReference type="InterPro" id="IPR040637">
    <property type="entry name" value="Ribosomal_uL10-like_insert"/>
</dbReference>
<dbReference type="InterPro" id="IPR043164">
    <property type="entry name" value="Ribosomal_uL10-like_insert_sf"/>
</dbReference>
<dbReference type="InterPro" id="IPR043141">
    <property type="entry name" value="Ribosomal_uL10-like_sf"/>
</dbReference>
<dbReference type="InterPro" id="IPR051742">
    <property type="entry name" value="Ribosome_Assembly_uL10"/>
</dbReference>
<dbReference type="PANTHER" id="PTHR45841:SF1">
    <property type="entry name" value="MRNA TURNOVER PROTEIN 4 HOMOLOG"/>
    <property type="match status" value="1"/>
</dbReference>
<dbReference type="PANTHER" id="PTHR45841">
    <property type="entry name" value="MRNA TURNOVER PROTEIN 4 MRTO4"/>
    <property type="match status" value="1"/>
</dbReference>
<dbReference type="Pfam" id="PF00466">
    <property type="entry name" value="Ribosomal_L10"/>
    <property type="match status" value="1"/>
</dbReference>
<dbReference type="Pfam" id="PF17777">
    <property type="entry name" value="RL10P_insert"/>
    <property type="match status" value="1"/>
</dbReference>
<dbReference type="SUPFAM" id="SSF160369">
    <property type="entry name" value="Ribosomal protein L10-like"/>
    <property type="match status" value="1"/>
</dbReference>